<comment type="function">
    <text evidence="1">Catalyzes the initial step of the lipid cycle reactions in the biosynthesis of the cell wall peptidoglycan: transfers peptidoglycan precursor phospho-MurNAc-pentapeptide from UDP-MurNAc-pentapeptide onto the lipid carrier undecaprenyl phosphate, yielding undecaprenyl-pyrophosphoryl-MurNAc-pentapeptide, known as lipid I.</text>
</comment>
<comment type="catalytic activity">
    <reaction evidence="1">
        <text>UDP-N-acetyl-alpha-D-muramoyl-L-alanyl-gamma-D-glutamyl-meso-2,6-diaminopimeloyl-D-alanyl-D-alanine + di-trans,octa-cis-undecaprenyl phosphate = di-trans,octa-cis-undecaprenyl diphospho-N-acetyl-alpha-D-muramoyl-L-alanyl-D-glutamyl-meso-2,6-diaminopimeloyl-D-alanyl-D-alanine + UMP</text>
        <dbReference type="Rhea" id="RHEA:28386"/>
        <dbReference type="ChEBI" id="CHEBI:57865"/>
        <dbReference type="ChEBI" id="CHEBI:60392"/>
        <dbReference type="ChEBI" id="CHEBI:61386"/>
        <dbReference type="ChEBI" id="CHEBI:61387"/>
        <dbReference type="EC" id="2.7.8.13"/>
    </reaction>
</comment>
<comment type="cofactor">
    <cofactor evidence="1">
        <name>Mg(2+)</name>
        <dbReference type="ChEBI" id="CHEBI:18420"/>
    </cofactor>
</comment>
<comment type="pathway">
    <text evidence="1">Cell wall biogenesis; peptidoglycan biosynthesis.</text>
</comment>
<comment type="subcellular location">
    <subcellularLocation>
        <location evidence="1">Cell membrane</location>
        <topology evidence="1">Multi-pass membrane protein</topology>
    </subcellularLocation>
</comment>
<comment type="similarity">
    <text evidence="1">Belongs to the glycosyltransferase 4 family. MraY subfamily.</text>
</comment>
<name>MRAY_BIFAA</name>
<reference key="1">
    <citation type="submission" date="2006-12" db="EMBL/GenBank/DDBJ databases">
        <title>Bifidobacterium adolescentis complete genome sequence.</title>
        <authorList>
            <person name="Suzuki T."/>
            <person name="Tsuda Y."/>
            <person name="Kanou N."/>
            <person name="Inoue T."/>
            <person name="Kumazaki K."/>
            <person name="Nagano S."/>
            <person name="Hirai S."/>
            <person name="Tanaka K."/>
            <person name="Watanabe K."/>
        </authorList>
    </citation>
    <scope>NUCLEOTIDE SEQUENCE [LARGE SCALE GENOMIC DNA]</scope>
    <source>
        <strain>ATCC 15703 / DSM 20083 / NCTC 11814 / E194a</strain>
    </source>
</reference>
<organism>
    <name type="scientific">Bifidobacterium adolescentis (strain ATCC 15703 / DSM 20083 / NCTC 11814 / E194a)</name>
    <dbReference type="NCBI Taxonomy" id="367928"/>
    <lineage>
        <taxon>Bacteria</taxon>
        <taxon>Bacillati</taxon>
        <taxon>Actinomycetota</taxon>
        <taxon>Actinomycetes</taxon>
        <taxon>Bifidobacteriales</taxon>
        <taxon>Bifidobacteriaceae</taxon>
        <taxon>Bifidobacterium</taxon>
    </lineage>
</organism>
<accession>A1A2F2</accession>
<gene>
    <name evidence="1" type="primary">mraY</name>
    <name type="ordered locus">BAD_1104</name>
</gene>
<dbReference type="EC" id="2.7.8.13" evidence="1"/>
<dbReference type="EMBL" id="AP009256">
    <property type="protein sequence ID" value="BAF39885.1"/>
    <property type="molecule type" value="Genomic_DNA"/>
</dbReference>
<dbReference type="RefSeq" id="WP_003810755.1">
    <property type="nucleotide sequence ID" value="NZ_CAXVNC010000002.1"/>
</dbReference>
<dbReference type="SMR" id="A1A2F2"/>
<dbReference type="STRING" id="367928.BAD_1104"/>
<dbReference type="PaxDb" id="1680-BADO_1154"/>
<dbReference type="GeneID" id="4556380"/>
<dbReference type="KEGG" id="bad:BAD_1104"/>
<dbReference type="HOGENOM" id="CLU_023982_0_1_11"/>
<dbReference type="UniPathway" id="UPA00219"/>
<dbReference type="Proteomes" id="UP000008702">
    <property type="component" value="Chromosome"/>
</dbReference>
<dbReference type="GO" id="GO:0005886">
    <property type="term" value="C:plasma membrane"/>
    <property type="evidence" value="ECO:0007669"/>
    <property type="project" value="UniProtKB-SubCell"/>
</dbReference>
<dbReference type="GO" id="GO:0046872">
    <property type="term" value="F:metal ion binding"/>
    <property type="evidence" value="ECO:0007669"/>
    <property type="project" value="UniProtKB-KW"/>
</dbReference>
<dbReference type="GO" id="GO:0008963">
    <property type="term" value="F:phospho-N-acetylmuramoyl-pentapeptide-transferase activity"/>
    <property type="evidence" value="ECO:0007669"/>
    <property type="project" value="UniProtKB-UniRule"/>
</dbReference>
<dbReference type="GO" id="GO:0051992">
    <property type="term" value="F:UDP-N-acetylmuramoyl-L-alanyl-D-glutamyl-meso-2,6-diaminopimelyl-D-alanyl-D-alanine:undecaprenyl-phosphate transferase activity"/>
    <property type="evidence" value="ECO:0007669"/>
    <property type="project" value="RHEA"/>
</dbReference>
<dbReference type="GO" id="GO:0051301">
    <property type="term" value="P:cell division"/>
    <property type="evidence" value="ECO:0007669"/>
    <property type="project" value="UniProtKB-KW"/>
</dbReference>
<dbReference type="GO" id="GO:0071555">
    <property type="term" value="P:cell wall organization"/>
    <property type="evidence" value="ECO:0007669"/>
    <property type="project" value="UniProtKB-KW"/>
</dbReference>
<dbReference type="GO" id="GO:0009252">
    <property type="term" value="P:peptidoglycan biosynthetic process"/>
    <property type="evidence" value="ECO:0007669"/>
    <property type="project" value="UniProtKB-UniRule"/>
</dbReference>
<dbReference type="GO" id="GO:0008360">
    <property type="term" value="P:regulation of cell shape"/>
    <property type="evidence" value="ECO:0007669"/>
    <property type="project" value="UniProtKB-KW"/>
</dbReference>
<dbReference type="CDD" id="cd06852">
    <property type="entry name" value="GT_MraY"/>
    <property type="match status" value="1"/>
</dbReference>
<dbReference type="HAMAP" id="MF_00038">
    <property type="entry name" value="MraY"/>
    <property type="match status" value="1"/>
</dbReference>
<dbReference type="InterPro" id="IPR000715">
    <property type="entry name" value="Glycosyl_transferase_4"/>
</dbReference>
<dbReference type="InterPro" id="IPR003524">
    <property type="entry name" value="PNAcMuramoyl-5peptid_Trfase"/>
</dbReference>
<dbReference type="InterPro" id="IPR018480">
    <property type="entry name" value="PNAcMuramoyl-5peptid_Trfase_CS"/>
</dbReference>
<dbReference type="NCBIfam" id="TIGR00445">
    <property type="entry name" value="mraY"/>
    <property type="match status" value="1"/>
</dbReference>
<dbReference type="PANTHER" id="PTHR22926">
    <property type="entry name" value="PHOSPHO-N-ACETYLMURAMOYL-PENTAPEPTIDE-TRANSFERASE"/>
    <property type="match status" value="1"/>
</dbReference>
<dbReference type="PANTHER" id="PTHR22926:SF5">
    <property type="entry name" value="PHOSPHO-N-ACETYLMURAMOYL-PENTAPEPTIDE-TRANSFERASE HOMOLOG"/>
    <property type="match status" value="1"/>
</dbReference>
<dbReference type="Pfam" id="PF00953">
    <property type="entry name" value="Glycos_transf_4"/>
    <property type="match status" value="1"/>
</dbReference>
<dbReference type="PROSITE" id="PS01348">
    <property type="entry name" value="MRAY_2"/>
    <property type="match status" value="1"/>
</dbReference>
<feature type="chain" id="PRO_1000002939" description="Phospho-N-acetylmuramoyl-pentapeptide-transferase">
    <location>
        <begin position="1"/>
        <end position="365"/>
    </location>
</feature>
<feature type="transmembrane region" description="Helical" evidence="1">
    <location>
        <begin position="2"/>
        <end position="22"/>
    </location>
</feature>
<feature type="transmembrane region" description="Helical" evidence="1">
    <location>
        <begin position="51"/>
        <end position="71"/>
    </location>
</feature>
<feature type="transmembrane region" description="Helical" evidence="1">
    <location>
        <begin position="80"/>
        <end position="100"/>
    </location>
</feature>
<feature type="transmembrane region" description="Helical" evidence="1">
    <location>
        <begin position="118"/>
        <end position="138"/>
    </location>
</feature>
<feature type="transmembrane region" description="Helical" evidence="1">
    <location>
        <begin position="167"/>
        <end position="187"/>
    </location>
</feature>
<feature type="transmembrane region" description="Helical" evidence="1">
    <location>
        <begin position="196"/>
        <end position="216"/>
    </location>
</feature>
<feature type="transmembrane region" description="Helical" evidence="1">
    <location>
        <begin position="234"/>
        <end position="254"/>
    </location>
</feature>
<feature type="transmembrane region" description="Helical" evidence="1">
    <location>
        <begin position="256"/>
        <end position="276"/>
    </location>
</feature>
<feature type="transmembrane region" description="Helical" evidence="1">
    <location>
        <begin position="277"/>
        <end position="297"/>
    </location>
</feature>
<feature type="transmembrane region" description="Helical" evidence="1">
    <location>
        <begin position="340"/>
        <end position="360"/>
    </location>
</feature>
<evidence type="ECO:0000255" key="1">
    <source>
        <dbReference type="HAMAP-Rule" id="MF_00038"/>
    </source>
</evidence>
<keyword id="KW-0131">Cell cycle</keyword>
<keyword id="KW-0132">Cell division</keyword>
<keyword id="KW-1003">Cell membrane</keyword>
<keyword id="KW-0133">Cell shape</keyword>
<keyword id="KW-0961">Cell wall biogenesis/degradation</keyword>
<keyword id="KW-0460">Magnesium</keyword>
<keyword id="KW-0472">Membrane</keyword>
<keyword id="KW-0479">Metal-binding</keyword>
<keyword id="KW-0573">Peptidoglycan synthesis</keyword>
<keyword id="KW-1185">Reference proteome</keyword>
<keyword id="KW-0808">Transferase</keyword>
<keyword id="KW-0812">Transmembrane</keyword>
<keyword id="KW-1133">Transmembrane helix</keyword>
<sequence>MISLIIGIMVSLVVTIVGTPLLIKLVHKLNYGQYIRQDGPKSHLVKRGTPTLGGVVINLAVVLGWCSSALYRFLTRGEVPSWSAVLVLFAMLSMGFLGFIDDFAKVRKKQSEGLTVKGKFIGQFILATIYAVLALILPTKSGFPSAQAGMSFIEKPFFSFEFAGRVVAIVLFVIWVNFLMTAWTNAINLTDGLDGLAAGSSMIAFIGYAIIAFWEFYHLKGSDHPGFTYAVSDPLDLTIIAACAAVACFGFLWYNSNPASIFMGDTGSLALGGLFAAMSIATHTEFLAIILGGLFVIETMSDIIQVGYFKMTHKRVFKMAPIHHHFELKGWPEVKVVVRFWMIEMLFVLIALVLFYGDWVARSGL</sequence>
<proteinExistence type="inferred from homology"/>
<protein>
    <recommendedName>
        <fullName evidence="1">Phospho-N-acetylmuramoyl-pentapeptide-transferase</fullName>
        <ecNumber evidence="1">2.7.8.13</ecNumber>
    </recommendedName>
    <alternativeName>
        <fullName evidence="1">UDP-MurNAc-pentapeptide phosphotransferase</fullName>
    </alternativeName>
</protein>